<gene>
    <name evidence="1" type="primary">rnt</name>
    <name type="ordered locus">KPN78578_19610</name>
    <name type="ORF">KPN_01991</name>
</gene>
<evidence type="ECO:0000255" key="1">
    <source>
        <dbReference type="HAMAP-Rule" id="MF_00157"/>
    </source>
</evidence>
<protein>
    <recommendedName>
        <fullName evidence="1">Ribonuclease T</fullName>
        <ecNumber evidence="1">3.1.13.-</ecNumber>
    </recommendedName>
    <alternativeName>
        <fullName evidence="1">Exoribonuclease T</fullName>
        <shortName evidence="1">RNase T</shortName>
    </alternativeName>
</protein>
<sequence>MSENAQLNGLCDRFRGFYPVVIDVETAGFNAKTDALLEIAAITLKMDEHGWLMPDETLHFHVEPFEGANLQPEALAFNGINPHDPQRGAVSEYDALHAIFKMVRKGMKESDCSRAIMVAHNATFDHSFTMTAAERAGLKRNPFHPFVTFDTAALSGLALGQTVLSKACIAAGMPFDGAQAHSALYDTEQTAQLFCEIVNRWKRLGGWPLPVATPE</sequence>
<accession>A6TA01</accession>
<reference key="1">
    <citation type="submission" date="2006-09" db="EMBL/GenBank/DDBJ databases">
        <authorList>
            <consortium name="The Klebsiella pneumonia Genome Sequencing Project"/>
            <person name="McClelland M."/>
            <person name="Sanderson E.K."/>
            <person name="Spieth J."/>
            <person name="Clifton W.S."/>
            <person name="Latreille P."/>
            <person name="Sabo A."/>
            <person name="Pepin K."/>
            <person name="Bhonagiri V."/>
            <person name="Porwollik S."/>
            <person name="Ali J."/>
            <person name="Wilson R.K."/>
        </authorList>
    </citation>
    <scope>NUCLEOTIDE SEQUENCE [LARGE SCALE GENOMIC DNA]</scope>
    <source>
        <strain>ATCC 700721 / MGH 78578</strain>
    </source>
</reference>
<organism>
    <name type="scientific">Klebsiella pneumoniae subsp. pneumoniae (strain ATCC 700721 / MGH 78578)</name>
    <dbReference type="NCBI Taxonomy" id="272620"/>
    <lineage>
        <taxon>Bacteria</taxon>
        <taxon>Pseudomonadati</taxon>
        <taxon>Pseudomonadota</taxon>
        <taxon>Gammaproteobacteria</taxon>
        <taxon>Enterobacterales</taxon>
        <taxon>Enterobacteriaceae</taxon>
        <taxon>Klebsiella/Raoultella group</taxon>
        <taxon>Klebsiella</taxon>
        <taxon>Klebsiella pneumoniae complex</taxon>
    </lineage>
</organism>
<name>RNT_KLEP7</name>
<dbReference type="EC" id="3.1.13.-" evidence="1"/>
<dbReference type="EMBL" id="CP000647">
    <property type="protein sequence ID" value="ABR77422.1"/>
    <property type="molecule type" value="Genomic_DNA"/>
</dbReference>
<dbReference type="RefSeq" id="WP_002907766.1">
    <property type="nucleotide sequence ID" value="NC_009648.1"/>
</dbReference>
<dbReference type="SMR" id="A6TA01"/>
<dbReference type="STRING" id="272620.KPN_01991"/>
<dbReference type="PaxDb" id="272620-KPN_01991"/>
<dbReference type="EnsemblBacteria" id="ABR77422">
    <property type="protein sequence ID" value="ABR77422"/>
    <property type="gene ID" value="KPN_01991"/>
</dbReference>
<dbReference type="KEGG" id="kpn:KPN_01991"/>
<dbReference type="HOGENOM" id="CLU_082724_0_0_6"/>
<dbReference type="Proteomes" id="UP000000265">
    <property type="component" value="Chromosome"/>
</dbReference>
<dbReference type="GO" id="GO:0005829">
    <property type="term" value="C:cytosol"/>
    <property type="evidence" value="ECO:0007669"/>
    <property type="project" value="TreeGrafter"/>
</dbReference>
<dbReference type="GO" id="GO:0008408">
    <property type="term" value="F:3'-5' exonuclease activity"/>
    <property type="evidence" value="ECO:0007669"/>
    <property type="project" value="TreeGrafter"/>
</dbReference>
<dbReference type="GO" id="GO:0000287">
    <property type="term" value="F:magnesium ion binding"/>
    <property type="evidence" value="ECO:0007669"/>
    <property type="project" value="UniProtKB-UniRule"/>
</dbReference>
<dbReference type="GO" id="GO:0003676">
    <property type="term" value="F:nucleic acid binding"/>
    <property type="evidence" value="ECO:0007669"/>
    <property type="project" value="InterPro"/>
</dbReference>
<dbReference type="GO" id="GO:0016896">
    <property type="term" value="F:RNA exonuclease activity, producing 5'-phosphomonoesters"/>
    <property type="evidence" value="ECO:0007669"/>
    <property type="project" value="UniProtKB-UniRule"/>
</dbReference>
<dbReference type="GO" id="GO:0045004">
    <property type="term" value="P:DNA replication proofreading"/>
    <property type="evidence" value="ECO:0007669"/>
    <property type="project" value="TreeGrafter"/>
</dbReference>
<dbReference type="GO" id="GO:0008033">
    <property type="term" value="P:tRNA processing"/>
    <property type="evidence" value="ECO:0007669"/>
    <property type="project" value="UniProtKB-KW"/>
</dbReference>
<dbReference type="CDD" id="cd06134">
    <property type="entry name" value="RNaseT"/>
    <property type="match status" value="1"/>
</dbReference>
<dbReference type="FunFam" id="3.30.420.10:FF:000009">
    <property type="entry name" value="Ribonuclease T"/>
    <property type="match status" value="1"/>
</dbReference>
<dbReference type="Gene3D" id="3.30.420.10">
    <property type="entry name" value="Ribonuclease H-like superfamily/Ribonuclease H"/>
    <property type="match status" value="1"/>
</dbReference>
<dbReference type="HAMAP" id="MF_00157">
    <property type="entry name" value="RNase_T"/>
    <property type="match status" value="1"/>
</dbReference>
<dbReference type="InterPro" id="IPR013520">
    <property type="entry name" value="Exonuclease_RNaseT/DNA_pol3"/>
</dbReference>
<dbReference type="InterPro" id="IPR005987">
    <property type="entry name" value="RNase_T"/>
</dbReference>
<dbReference type="InterPro" id="IPR012337">
    <property type="entry name" value="RNaseH-like_sf"/>
</dbReference>
<dbReference type="InterPro" id="IPR036397">
    <property type="entry name" value="RNaseH_sf"/>
</dbReference>
<dbReference type="NCBIfam" id="TIGR01298">
    <property type="entry name" value="RNaseT"/>
    <property type="match status" value="1"/>
</dbReference>
<dbReference type="PANTHER" id="PTHR30231">
    <property type="entry name" value="DNA POLYMERASE III SUBUNIT EPSILON"/>
    <property type="match status" value="1"/>
</dbReference>
<dbReference type="PANTHER" id="PTHR30231:SF2">
    <property type="entry name" value="RIBONUCLEASE T"/>
    <property type="match status" value="1"/>
</dbReference>
<dbReference type="Pfam" id="PF00929">
    <property type="entry name" value="RNase_T"/>
    <property type="match status" value="1"/>
</dbReference>
<dbReference type="SMART" id="SM00479">
    <property type="entry name" value="EXOIII"/>
    <property type="match status" value="1"/>
</dbReference>
<dbReference type="SUPFAM" id="SSF53098">
    <property type="entry name" value="Ribonuclease H-like"/>
    <property type="match status" value="1"/>
</dbReference>
<feature type="chain" id="PRO_1000011400" description="Ribonuclease T">
    <location>
        <begin position="1"/>
        <end position="215"/>
    </location>
</feature>
<feature type="domain" description="Exonuclease" evidence="1">
    <location>
        <begin position="20"/>
        <end position="194"/>
    </location>
</feature>
<feature type="active site" description="Proton donor/acceptor" evidence="1">
    <location>
        <position position="181"/>
    </location>
</feature>
<feature type="binding site" evidence="1">
    <location>
        <position position="23"/>
    </location>
    <ligand>
        <name>Mg(2+)</name>
        <dbReference type="ChEBI" id="CHEBI:18420"/>
        <label>1</label>
        <note>catalytic</note>
    </ligand>
</feature>
<feature type="binding site" evidence="1">
    <location>
        <position position="23"/>
    </location>
    <ligand>
        <name>Mg(2+)</name>
        <dbReference type="ChEBI" id="CHEBI:18420"/>
        <label>2</label>
        <note>catalytic</note>
    </ligand>
</feature>
<feature type="binding site" evidence="1">
    <location>
        <position position="25"/>
    </location>
    <ligand>
        <name>Mg(2+)</name>
        <dbReference type="ChEBI" id="CHEBI:18420"/>
        <label>2</label>
        <note>catalytic</note>
    </ligand>
</feature>
<feature type="binding site" evidence="1">
    <location>
        <position position="181"/>
    </location>
    <ligand>
        <name>Mg(2+)</name>
        <dbReference type="ChEBI" id="CHEBI:18420"/>
        <label>2</label>
        <note>catalytic</note>
    </ligand>
</feature>
<feature type="binding site" evidence="1">
    <location>
        <position position="186"/>
    </location>
    <ligand>
        <name>Mg(2+)</name>
        <dbReference type="ChEBI" id="CHEBI:18420"/>
        <label>2</label>
        <note>catalytic</note>
    </ligand>
</feature>
<feature type="site" description="Important for substrate binding and specificity" evidence="1">
    <location>
        <position position="29"/>
    </location>
</feature>
<feature type="site" description="Important for substrate binding and specificity" evidence="1">
    <location>
        <position position="77"/>
    </location>
</feature>
<feature type="site" description="Important for substrate binding and specificity" evidence="1">
    <location>
        <position position="124"/>
    </location>
</feature>
<feature type="site" description="Important for substrate binding and specificity" evidence="1">
    <location>
        <position position="146"/>
    </location>
</feature>
<keyword id="KW-0269">Exonuclease</keyword>
<keyword id="KW-0378">Hydrolase</keyword>
<keyword id="KW-0460">Magnesium</keyword>
<keyword id="KW-0479">Metal-binding</keyword>
<keyword id="KW-0540">Nuclease</keyword>
<keyword id="KW-0819">tRNA processing</keyword>
<comment type="function">
    <text evidence="1">Trims short 3' overhangs of a variety of RNA species, leaving a one or two nucleotide 3' overhang. Responsible for the end-turnover of tRNA: specifically removes the terminal AMP residue from uncharged tRNA (tRNA-C-C-A). Also appears to be involved in tRNA biosynthesis.</text>
</comment>
<comment type="cofactor">
    <cofactor evidence="1">
        <name>Mg(2+)</name>
        <dbReference type="ChEBI" id="CHEBI:18420"/>
    </cofactor>
    <text evidence="1">Binds two Mg(2+) per subunit. The active form of the enzyme binds two Mg(2+) ions in its active site. The first Mg(2+) forms only one salt bridge with the protein.</text>
</comment>
<comment type="subunit">
    <text evidence="1">Homodimer.</text>
</comment>
<comment type="similarity">
    <text evidence="1">Belongs to the RNase T family.</text>
</comment>
<proteinExistence type="inferred from homology"/>